<gene>
    <name evidence="1" type="primary">pgi</name>
    <name type="ordered locus">Bcenmc03_1940</name>
</gene>
<keyword id="KW-0963">Cytoplasm</keyword>
<keyword id="KW-0312">Gluconeogenesis</keyword>
<keyword id="KW-0324">Glycolysis</keyword>
<keyword id="KW-0413">Isomerase</keyword>
<comment type="function">
    <text evidence="1">Catalyzes the reversible isomerization of glucose-6-phosphate to fructose-6-phosphate.</text>
</comment>
<comment type="catalytic activity">
    <reaction evidence="1">
        <text>alpha-D-glucose 6-phosphate = beta-D-fructose 6-phosphate</text>
        <dbReference type="Rhea" id="RHEA:11816"/>
        <dbReference type="ChEBI" id="CHEBI:57634"/>
        <dbReference type="ChEBI" id="CHEBI:58225"/>
        <dbReference type="EC" id="5.3.1.9"/>
    </reaction>
</comment>
<comment type="pathway">
    <text evidence="1">Carbohydrate biosynthesis; gluconeogenesis.</text>
</comment>
<comment type="pathway">
    <text evidence="1">Carbohydrate degradation; glycolysis; D-glyceraldehyde 3-phosphate and glycerone phosphate from D-glucose: step 2/4.</text>
</comment>
<comment type="subcellular location">
    <subcellularLocation>
        <location evidence="1">Cytoplasm</location>
    </subcellularLocation>
</comment>
<comment type="similarity">
    <text evidence="1">Belongs to the GPI family.</text>
</comment>
<reference key="1">
    <citation type="submission" date="2008-02" db="EMBL/GenBank/DDBJ databases">
        <title>Complete sequence of chromosome 1 of Burkholderia cenocepacia MC0-3.</title>
        <authorList>
            <person name="Copeland A."/>
            <person name="Lucas S."/>
            <person name="Lapidus A."/>
            <person name="Barry K."/>
            <person name="Bruce D."/>
            <person name="Goodwin L."/>
            <person name="Glavina del Rio T."/>
            <person name="Dalin E."/>
            <person name="Tice H."/>
            <person name="Pitluck S."/>
            <person name="Chain P."/>
            <person name="Malfatti S."/>
            <person name="Shin M."/>
            <person name="Vergez L."/>
            <person name="Schmutz J."/>
            <person name="Larimer F."/>
            <person name="Land M."/>
            <person name="Hauser L."/>
            <person name="Kyrpides N."/>
            <person name="Mikhailova N."/>
            <person name="Tiedje J."/>
            <person name="Richardson P."/>
        </authorList>
    </citation>
    <scope>NUCLEOTIDE SEQUENCE [LARGE SCALE GENOMIC DNA]</scope>
    <source>
        <strain>MC0-3</strain>
    </source>
</reference>
<sequence>MTLKSLPAWTALQSHFEQIRHARLRDWFAPENDRAPTRAERFTIPGGGLAADFSKNRIDDETLRLLVQLARDAGVEARRDAMFAGEIVNPTEGRAALHTALRATDPQAPFHAQVSAERAKMATFARAVRSGTWTGYTGKRIRHVINIGIGGSDLGPKMVVHALHHVATPEISTHFVSNVDGADLARVLEQVDPEETLAIIVSKTFTTLETMTNARSLRDWFVARGCPEDALAKHFVGVSANPAEVVKFGIAADNVFEMWDWVGGRYSLWSAVGLSIMIAIGPEQFDELLAGANDMDRHFREAPLERNLPVLLGLIGIWYRNFFGSQSYLVAPYSEALHYLPSYLQQLEMESNGKSARLDGTFVDYPTSAVTWGEPGTNGQHAFFQMLHQGPTIVPIDFIAVLTPEHPLASHHPKLLANCFAQSEALMLGRTLEEARKVAGPGKEALAPHLTFPGNRPTTTLLVDALTPRTLGALIALYEHKVLVQATVWDINPFDQWGVELGKILGKVVEADLSAESVDPAKHDSSTTALIERARAALKR</sequence>
<feature type="chain" id="PRO_1000125700" description="Glucose-6-phosphate isomerase">
    <location>
        <begin position="1"/>
        <end position="540"/>
    </location>
</feature>
<feature type="active site" description="Proton donor" evidence="1">
    <location>
        <position position="350"/>
    </location>
</feature>
<feature type="active site" evidence="1">
    <location>
        <position position="381"/>
    </location>
</feature>
<feature type="active site" evidence="1">
    <location>
        <position position="503"/>
    </location>
</feature>
<organism>
    <name type="scientific">Burkholderia orbicola (strain MC0-3)</name>
    <dbReference type="NCBI Taxonomy" id="406425"/>
    <lineage>
        <taxon>Bacteria</taxon>
        <taxon>Pseudomonadati</taxon>
        <taxon>Pseudomonadota</taxon>
        <taxon>Betaproteobacteria</taxon>
        <taxon>Burkholderiales</taxon>
        <taxon>Burkholderiaceae</taxon>
        <taxon>Burkholderia</taxon>
        <taxon>Burkholderia cepacia complex</taxon>
        <taxon>Burkholderia orbicola</taxon>
    </lineage>
</organism>
<name>G6PI_BURO0</name>
<protein>
    <recommendedName>
        <fullName evidence="1">Glucose-6-phosphate isomerase</fullName>
        <shortName evidence="1">GPI</shortName>
        <ecNumber evidence="1">5.3.1.9</ecNumber>
    </recommendedName>
    <alternativeName>
        <fullName evidence="1">Phosphoglucose isomerase</fullName>
        <shortName evidence="1">PGI</shortName>
    </alternativeName>
    <alternativeName>
        <fullName evidence="1">Phosphohexose isomerase</fullName>
        <shortName evidence="1">PHI</shortName>
    </alternativeName>
</protein>
<dbReference type="EC" id="5.3.1.9" evidence="1"/>
<dbReference type="EMBL" id="CP000958">
    <property type="protein sequence ID" value="ACA91101.1"/>
    <property type="molecule type" value="Genomic_DNA"/>
</dbReference>
<dbReference type="RefSeq" id="WP_012328695.1">
    <property type="nucleotide sequence ID" value="NC_010508.1"/>
</dbReference>
<dbReference type="SMR" id="B1JTU4"/>
<dbReference type="GeneID" id="83048713"/>
<dbReference type="KEGG" id="bcm:Bcenmc03_1940"/>
<dbReference type="HOGENOM" id="CLU_017947_3_1_4"/>
<dbReference type="UniPathway" id="UPA00109">
    <property type="reaction ID" value="UER00181"/>
</dbReference>
<dbReference type="UniPathway" id="UPA00138"/>
<dbReference type="Proteomes" id="UP000002169">
    <property type="component" value="Chromosome 1"/>
</dbReference>
<dbReference type="GO" id="GO:0005829">
    <property type="term" value="C:cytosol"/>
    <property type="evidence" value="ECO:0007669"/>
    <property type="project" value="TreeGrafter"/>
</dbReference>
<dbReference type="GO" id="GO:0097367">
    <property type="term" value="F:carbohydrate derivative binding"/>
    <property type="evidence" value="ECO:0007669"/>
    <property type="project" value="InterPro"/>
</dbReference>
<dbReference type="GO" id="GO:0004347">
    <property type="term" value="F:glucose-6-phosphate isomerase activity"/>
    <property type="evidence" value="ECO:0007669"/>
    <property type="project" value="UniProtKB-UniRule"/>
</dbReference>
<dbReference type="GO" id="GO:0048029">
    <property type="term" value="F:monosaccharide binding"/>
    <property type="evidence" value="ECO:0007669"/>
    <property type="project" value="TreeGrafter"/>
</dbReference>
<dbReference type="GO" id="GO:0006094">
    <property type="term" value="P:gluconeogenesis"/>
    <property type="evidence" value="ECO:0007669"/>
    <property type="project" value="UniProtKB-UniRule"/>
</dbReference>
<dbReference type="GO" id="GO:0051156">
    <property type="term" value="P:glucose 6-phosphate metabolic process"/>
    <property type="evidence" value="ECO:0007669"/>
    <property type="project" value="TreeGrafter"/>
</dbReference>
<dbReference type="GO" id="GO:0006096">
    <property type="term" value="P:glycolytic process"/>
    <property type="evidence" value="ECO:0007669"/>
    <property type="project" value="UniProtKB-UniRule"/>
</dbReference>
<dbReference type="CDD" id="cd05015">
    <property type="entry name" value="SIS_PGI_1"/>
    <property type="match status" value="1"/>
</dbReference>
<dbReference type="CDD" id="cd05016">
    <property type="entry name" value="SIS_PGI_2"/>
    <property type="match status" value="1"/>
</dbReference>
<dbReference type="Gene3D" id="1.10.1390.10">
    <property type="match status" value="1"/>
</dbReference>
<dbReference type="Gene3D" id="3.40.50.10490">
    <property type="entry name" value="Glucose-6-phosphate isomerase like protein, domain 1"/>
    <property type="match status" value="2"/>
</dbReference>
<dbReference type="HAMAP" id="MF_00473">
    <property type="entry name" value="G6P_isomerase"/>
    <property type="match status" value="1"/>
</dbReference>
<dbReference type="InterPro" id="IPR001672">
    <property type="entry name" value="G6P_Isomerase"/>
</dbReference>
<dbReference type="InterPro" id="IPR023096">
    <property type="entry name" value="G6P_Isomerase_C"/>
</dbReference>
<dbReference type="InterPro" id="IPR018189">
    <property type="entry name" value="Phosphoglucose_isomerase_CS"/>
</dbReference>
<dbReference type="InterPro" id="IPR046348">
    <property type="entry name" value="SIS_dom_sf"/>
</dbReference>
<dbReference type="InterPro" id="IPR035476">
    <property type="entry name" value="SIS_PGI_1"/>
</dbReference>
<dbReference type="InterPro" id="IPR035482">
    <property type="entry name" value="SIS_PGI_2"/>
</dbReference>
<dbReference type="NCBIfam" id="NF001211">
    <property type="entry name" value="PRK00179.1"/>
    <property type="match status" value="1"/>
</dbReference>
<dbReference type="PANTHER" id="PTHR11469">
    <property type="entry name" value="GLUCOSE-6-PHOSPHATE ISOMERASE"/>
    <property type="match status" value="1"/>
</dbReference>
<dbReference type="PANTHER" id="PTHR11469:SF1">
    <property type="entry name" value="GLUCOSE-6-PHOSPHATE ISOMERASE"/>
    <property type="match status" value="1"/>
</dbReference>
<dbReference type="Pfam" id="PF00342">
    <property type="entry name" value="PGI"/>
    <property type="match status" value="1"/>
</dbReference>
<dbReference type="PRINTS" id="PR00662">
    <property type="entry name" value="G6PISOMERASE"/>
</dbReference>
<dbReference type="SUPFAM" id="SSF53697">
    <property type="entry name" value="SIS domain"/>
    <property type="match status" value="1"/>
</dbReference>
<dbReference type="PROSITE" id="PS00765">
    <property type="entry name" value="P_GLUCOSE_ISOMERASE_1"/>
    <property type="match status" value="1"/>
</dbReference>
<dbReference type="PROSITE" id="PS00174">
    <property type="entry name" value="P_GLUCOSE_ISOMERASE_2"/>
    <property type="match status" value="1"/>
</dbReference>
<dbReference type="PROSITE" id="PS51463">
    <property type="entry name" value="P_GLUCOSE_ISOMERASE_3"/>
    <property type="match status" value="1"/>
</dbReference>
<accession>B1JTU4</accession>
<evidence type="ECO:0000255" key="1">
    <source>
        <dbReference type="HAMAP-Rule" id="MF_00473"/>
    </source>
</evidence>
<proteinExistence type="inferred from homology"/>